<comment type="function">
    <text evidence="1">Required presynaptically at the neuromuscular junction. Implicated in synaptic vesicle endocytosis.</text>
</comment>
<comment type="subcellular location">
    <subcellularLocation>
        <location evidence="1">Cytoplasm</location>
    </subcellularLocation>
    <subcellularLocation>
        <location evidence="1">Membrane</location>
        <topology evidence="1">Peripheral membrane protein</topology>
    </subcellularLocation>
    <text evidence="1">Associated with internal membranes. Expressed presynaptically at NMJs.</text>
</comment>
<comment type="similarity">
    <text evidence="2">Belongs to the endophilin family.</text>
</comment>
<reference evidence="6" key="1">
    <citation type="journal article" date="2002" name="Genome Biol.">
        <title>Assessing the impact of comparative genomic sequence data on the functional annotation of the Drosophila genome.</title>
        <authorList>
            <person name="Bergman C.M."/>
            <person name="Pfeiffer B.D."/>
            <person name="Rincon-Limas D.E."/>
            <person name="Hoskins R.A."/>
            <person name="Gnirke A."/>
            <person name="Mungall C.J."/>
            <person name="Wang A.M."/>
            <person name="Kronmiller B."/>
            <person name="Pacleb J.M."/>
            <person name="Park S."/>
            <person name="Stapleton M."/>
            <person name="Wan K.H."/>
            <person name="George R.A."/>
            <person name="de Jong P.J."/>
            <person name="Botas J."/>
            <person name="Rubin G.M."/>
            <person name="Celniker S.E."/>
        </authorList>
    </citation>
    <scope>NUCLEOTIDE SEQUENCE [LARGE SCALE GENOMIC DNA]</scope>
    <source>
        <strain evidence="6">Tucson 14030-0814.10</strain>
    </source>
</reference>
<reference key="2">
    <citation type="journal article" date="2007" name="Nature">
        <title>Evolution of genes and genomes on the Drosophila phylogeny.</title>
        <authorList>
            <consortium name="Drosophila 12 genomes consortium"/>
        </authorList>
    </citation>
    <scope>NUCLEOTIDE SEQUENCE [LARGE SCALE GENOMIC DNA]</scope>
    <source>
        <strain>Tucson 14030-0811.24</strain>
    </source>
</reference>
<evidence type="ECO:0000250" key="1">
    <source>
        <dbReference type="UniProtKB" id="Q8T390"/>
    </source>
</evidence>
<evidence type="ECO:0000255" key="2"/>
<evidence type="ECO:0000255" key="3">
    <source>
        <dbReference type="PROSITE-ProRule" id="PRU00192"/>
    </source>
</evidence>
<evidence type="ECO:0000255" key="4">
    <source>
        <dbReference type="PROSITE-ProRule" id="PRU00361"/>
    </source>
</evidence>
<evidence type="ECO:0000256" key="5">
    <source>
        <dbReference type="SAM" id="MobiDB-lite"/>
    </source>
</evidence>
<evidence type="ECO:0000312" key="6">
    <source>
        <dbReference type="EMBL" id="AAO01065.1"/>
    </source>
</evidence>
<gene>
    <name evidence="1" type="primary">EndoA</name>
    <name type="ORF">GK22746</name>
</gene>
<accession>Q8I1A6</accession>
<accession>B4NG04</accession>
<organism>
    <name type="scientific">Drosophila willistoni</name>
    <name type="common">Fruit fly</name>
    <dbReference type="NCBI Taxonomy" id="7260"/>
    <lineage>
        <taxon>Eukaryota</taxon>
        <taxon>Metazoa</taxon>
        <taxon>Ecdysozoa</taxon>
        <taxon>Arthropoda</taxon>
        <taxon>Hexapoda</taxon>
        <taxon>Insecta</taxon>
        <taxon>Pterygota</taxon>
        <taxon>Neoptera</taxon>
        <taxon>Endopterygota</taxon>
        <taxon>Diptera</taxon>
        <taxon>Brachycera</taxon>
        <taxon>Muscomorpha</taxon>
        <taxon>Ephydroidea</taxon>
        <taxon>Drosophilidae</taxon>
        <taxon>Drosophila</taxon>
        <taxon>Sophophora</taxon>
    </lineage>
</organism>
<protein>
    <recommendedName>
        <fullName>Endophilin-A</fullName>
    </recommendedName>
    <alternativeName>
        <fullName>SH3 domain-containing GRB2-like protein</fullName>
    </alternativeName>
</protein>
<sequence>MAFAGLKKQINKANQYMTEKMGGAEGTKLDMDFMEMERKTDVTVELVEELQLKTKEFLQPNPTARAKMAAVKGISKLSGQAKSNTYPQPEGLLAECMLTYGKKLGEDNSVFAQALVEFGEALKQMADVKYSLDDNIKQNFLEPLHHMQTKDLKEVMHHRKKLQGRRLDFDCKRRRQAKDDEIRGAEDKFGESLQLAQVGMFNLLENDTEHVSQLVTFAEALYDFHSQCADVLRGLQETLQEKRSEAESRPRNEFVPKTLLDLNLDGGGGGLNEDGTPSHISSSASPLPSPMRSPAKSMAVTPQRQQQPCCQALYDFDPENPGELGFKENDIITLLNRVDDNWYEGSVNGRTGYFPQSYVQVQVPLP</sequence>
<feature type="chain" id="PRO_0000285841" description="Endophilin-A">
    <location>
        <begin position="1"/>
        <end position="366"/>
    </location>
</feature>
<feature type="domain" description="BAR" evidence="4">
    <location>
        <begin position="18"/>
        <end position="248"/>
    </location>
</feature>
<feature type="domain" description="SH3" evidence="3">
    <location>
        <begin position="305"/>
        <end position="364"/>
    </location>
</feature>
<feature type="region of interest" description="Disordered" evidence="5">
    <location>
        <begin position="266"/>
        <end position="295"/>
    </location>
</feature>
<feature type="coiled-coil region" evidence="2">
    <location>
        <begin position="227"/>
        <end position="247"/>
    </location>
</feature>
<feature type="compositionally biased region" description="Low complexity" evidence="5">
    <location>
        <begin position="277"/>
        <end position="294"/>
    </location>
</feature>
<dbReference type="EMBL" id="AY190951">
    <property type="protein sequence ID" value="AAO01065.1"/>
    <property type="molecule type" value="Genomic_DNA"/>
</dbReference>
<dbReference type="EMBL" id="CH964251">
    <property type="protein sequence ID" value="EDW83221.1"/>
    <property type="molecule type" value="Genomic_DNA"/>
</dbReference>
<dbReference type="SMR" id="Q8I1A6"/>
<dbReference type="STRING" id="7260.Q8I1A6"/>
<dbReference type="EnsemblMetazoa" id="FBtr0253397">
    <property type="protein sequence ID" value="FBpp0251889"/>
    <property type="gene ID" value="FBgn0064269"/>
</dbReference>
<dbReference type="EnsemblMetazoa" id="XM_002072199.4">
    <property type="protein sequence ID" value="XP_002072235.1"/>
    <property type="gene ID" value="LOC6649854"/>
</dbReference>
<dbReference type="GeneID" id="6649854"/>
<dbReference type="KEGG" id="dwi:6649854"/>
<dbReference type="CTD" id="42265"/>
<dbReference type="eggNOG" id="KOG1118">
    <property type="taxonomic scope" value="Eukaryota"/>
</dbReference>
<dbReference type="HOGENOM" id="CLU_047887_0_0_1"/>
<dbReference type="OMA" id="MFPANYC"/>
<dbReference type="OrthoDB" id="443981at2759"/>
<dbReference type="PhylomeDB" id="Q8I1A6"/>
<dbReference type="Proteomes" id="UP000007798">
    <property type="component" value="Unassembled WGS sequence"/>
</dbReference>
<dbReference type="GO" id="GO:0005737">
    <property type="term" value="C:cytoplasm"/>
    <property type="evidence" value="ECO:0000250"/>
    <property type="project" value="UniProtKB"/>
</dbReference>
<dbReference type="GO" id="GO:0005829">
    <property type="term" value="C:cytosol"/>
    <property type="evidence" value="ECO:0007669"/>
    <property type="project" value="EnsemblMetazoa"/>
</dbReference>
<dbReference type="GO" id="GO:0098978">
    <property type="term" value="C:glutamatergic synapse"/>
    <property type="evidence" value="ECO:0007669"/>
    <property type="project" value="TreeGrafter"/>
</dbReference>
<dbReference type="GO" id="GO:0016020">
    <property type="term" value="C:membrane"/>
    <property type="evidence" value="ECO:0007669"/>
    <property type="project" value="UniProtKB-SubCell"/>
</dbReference>
<dbReference type="GO" id="GO:0061174">
    <property type="term" value="C:type I terminal bouton"/>
    <property type="evidence" value="ECO:0007669"/>
    <property type="project" value="EnsemblMetazoa"/>
</dbReference>
<dbReference type="GO" id="GO:0005543">
    <property type="term" value="F:phospholipid binding"/>
    <property type="evidence" value="ECO:0007669"/>
    <property type="project" value="EnsemblMetazoa"/>
</dbReference>
<dbReference type="GO" id="GO:0000045">
    <property type="term" value="P:autophagosome assembly"/>
    <property type="evidence" value="ECO:0007669"/>
    <property type="project" value="EnsemblMetazoa"/>
</dbReference>
<dbReference type="GO" id="GO:0009267">
    <property type="term" value="P:cellular response to starvation"/>
    <property type="evidence" value="ECO:0007669"/>
    <property type="project" value="EnsemblMetazoa"/>
</dbReference>
<dbReference type="GO" id="GO:0150007">
    <property type="term" value="P:clathrin-dependent synaptic vesicle endocytosis"/>
    <property type="evidence" value="ECO:0007669"/>
    <property type="project" value="EnsemblMetazoa"/>
</dbReference>
<dbReference type="GO" id="GO:0097753">
    <property type="term" value="P:membrane bending"/>
    <property type="evidence" value="ECO:0007669"/>
    <property type="project" value="EnsemblMetazoa"/>
</dbReference>
<dbReference type="GO" id="GO:0097749">
    <property type="term" value="P:membrane tubulation"/>
    <property type="evidence" value="ECO:0007669"/>
    <property type="project" value="EnsemblMetazoa"/>
</dbReference>
<dbReference type="GO" id="GO:0097320">
    <property type="term" value="P:plasma membrane tubulation"/>
    <property type="evidence" value="ECO:0007669"/>
    <property type="project" value="EnsemblMetazoa"/>
</dbReference>
<dbReference type="GO" id="GO:0050803">
    <property type="term" value="P:regulation of synapse structure or activity"/>
    <property type="evidence" value="ECO:0000250"/>
    <property type="project" value="UniProtKB"/>
</dbReference>
<dbReference type="GO" id="GO:0048488">
    <property type="term" value="P:synaptic vesicle endocytosis"/>
    <property type="evidence" value="ECO:0000250"/>
    <property type="project" value="UniProtKB"/>
</dbReference>
<dbReference type="GO" id="GO:0016191">
    <property type="term" value="P:synaptic vesicle uncoating"/>
    <property type="evidence" value="ECO:0007669"/>
    <property type="project" value="TreeGrafter"/>
</dbReference>
<dbReference type="CDD" id="cd07592">
    <property type="entry name" value="BAR_Endophilin_A"/>
    <property type="match status" value="1"/>
</dbReference>
<dbReference type="CDD" id="cd11803">
    <property type="entry name" value="SH3_Endophilin_A"/>
    <property type="match status" value="1"/>
</dbReference>
<dbReference type="FunFam" id="1.20.1270.60:FF:000021">
    <property type="entry name" value="Endophilin-A2 isoform 1"/>
    <property type="match status" value="1"/>
</dbReference>
<dbReference type="FunFam" id="2.30.30.40:FF:000072">
    <property type="entry name" value="Unconventional Myosin IB"/>
    <property type="match status" value="1"/>
</dbReference>
<dbReference type="Gene3D" id="1.20.1270.60">
    <property type="entry name" value="Arfaptin homology (AH) domain/BAR domain"/>
    <property type="match status" value="1"/>
</dbReference>
<dbReference type="Gene3D" id="2.30.30.40">
    <property type="entry name" value="SH3 Domains"/>
    <property type="match status" value="1"/>
</dbReference>
<dbReference type="InterPro" id="IPR027267">
    <property type="entry name" value="AH/BAR_dom_sf"/>
</dbReference>
<dbReference type="InterPro" id="IPR004148">
    <property type="entry name" value="BAR_dom"/>
</dbReference>
<dbReference type="InterPro" id="IPR035824">
    <property type="entry name" value="Endophilin_A_SH3"/>
</dbReference>
<dbReference type="InterPro" id="IPR050384">
    <property type="entry name" value="Endophilin_SH3RF"/>
</dbReference>
<dbReference type="InterPro" id="IPR036028">
    <property type="entry name" value="SH3-like_dom_sf"/>
</dbReference>
<dbReference type="InterPro" id="IPR001452">
    <property type="entry name" value="SH3_domain"/>
</dbReference>
<dbReference type="PANTHER" id="PTHR14167:SF81">
    <property type="entry name" value="ENDOPHILIN-A"/>
    <property type="match status" value="1"/>
</dbReference>
<dbReference type="PANTHER" id="PTHR14167">
    <property type="entry name" value="SH3 DOMAIN-CONTAINING"/>
    <property type="match status" value="1"/>
</dbReference>
<dbReference type="Pfam" id="PF03114">
    <property type="entry name" value="BAR"/>
    <property type="match status" value="1"/>
</dbReference>
<dbReference type="Pfam" id="PF00018">
    <property type="entry name" value="SH3_1"/>
    <property type="match status" value="1"/>
</dbReference>
<dbReference type="PRINTS" id="PR00452">
    <property type="entry name" value="SH3DOMAIN"/>
</dbReference>
<dbReference type="PRINTS" id="PR01887">
    <property type="entry name" value="SPECTRNALPHA"/>
</dbReference>
<dbReference type="SMART" id="SM00721">
    <property type="entry name" value="BAR"/>
    <property type="match status" value="1"/>
</dbReference>
<dbReference type="SMART" id="SM00326">
    <property type="entry name" value="SH3"/>
    <property type="match status" value="1"/>
</dbReference>
<dbReference type="SUPFAM" id="SSF103657">
    <property type="entry name" value="BAR/IMD domain-like"/>
    <property type="match status" value="1"/>
</dbReference>
<dbReference type="SUPFAM" id="SSF50044">
    <property type="entry name" value="SH3-domain"/>
    <property type="match status" value="1"/>
</dbReference>
<dbReference type="PROSITE" id="PS51021">
    <property type="entry name" value="BAR"/>
    <property type="match status" value="1"/>
</dbReference>
<dbReference type="PROSITE" id="PS50002">
    <property type="entry name" value="SH3"/>
    <property type="match status" value="1"/>
</dbReference>
<proteinExistence type="inferred from homology"/>
<keyword id="KW-0175">Coiled coil</keyword>
<keyword id="KW-0963">Cytoplasm</keyword>
<keyword id="KW-0254">Endocytosis</keyword>
<keyword id="KW-0472">Membrane</keyword>
<keyword id="KW-0597">Phosphoprotein</keyword>
<keyword id="KW-1185">Reference proteome</keyword>
<keyword id="KW-0728">SH3 domain</keyword>
<name>SH3G3_DROWI</name>